<name>GLNB1_METMP</name>
<sequence>MKMIRAVVRPSKAEEVVDALAESGCVALTKMDVIGRGKQKGIKIDQIYYDELPKTMLMLVVEDDAAENVIELITKTAYTGSFGDGKIFVSPVDEAYTVRTRSCGL</sequence>
<comment type="function">
    <text evidence="1">Could be involved in the regulation of nitrogen fixation.</text>
</comment>
<comment type="similarity">
    <text evidence="2">Belongs to the P(II) protein family.</text>
</comment>
<feature type="chain" id="PRO_0000408199" description="Nitrogen fixation nifHD region glnB-like protein 1">
    <location>
        <begin position="1"/>
        <end position="105"/>
    </location>
</feature>
<gene>
    <name type="primary">glnBI</name>
    <name type="synonym">nifI1</name>
    <name type="ordered locus">MMP0854</name>
</gene>
<dbReference type="EMBL" id="BX950229">
    <property type="protein sequence ID" value="CAF30410.1"/>
    <property type="molecule type" value="Genomic_DNA"/>
</dbReference>
<dbReference type="RefSeq" id="WP_011170798.1">
    <property type="nucleotide sequence ID" value="NC_005791.1"/>
</dbReference>
<dbReference type="SMR" id="P0CW45"/>
<dbReference type="STRING" id="267377.MMP0854"/>
<dbReference type="EnsemblBacteria" id="CAF30410">
    <property type="protein sequence ID" value="CAF30410"/>
    <property type="gene ID" value="MMP0854"/>
</dbReference>
<dbReference type="KEGG" id="mmp:MMP0854"/>
<dbReference type="PATRIC" id="fig|267377.15.peg.879"/>
<dbReference type="eggNOG" id="arCOG02306">
    <property type="taxonomic scope" value="Archaea"/>
</dbReference>
<dbReference type="HOGENOM" id="CLU_082268_0_1_2"/>
<dbReference type="OrthoDB" id="10960at2157"/>
<dbReference type="Proteomes" id="UP000000590">
    <property type="component" value="Chromosome"/>
</dbReference>
<dbReference type="GO" id="GO:0005829">
    <property type="term" value="C:cytosol"/>
    <property type="evidence" value="ECO:0007669"/>
    <property type="project" value="TreeGrafter"/>
</dbReference>
<dbReference type="GO" id="GO:0005524">
    <property type="term" value="F:ATP binding"/>
    <property type="evidence" value="ECO:0007669"/>
    <property type="project" value="TreeGrafter"/>
</dbReference>
<dbReference type="GO" id="GO:0030234">
    <property type="term" value="F:enzyme regulator activity"/>
    <property type="evidence" value="ECO:0007669"/>
    <property type="project" value="InterPro"/>
</dbReference>
<dbReference type="GO" id="GO:0009399">
    <property type="term" value="P:nitrogen fixation"/>
    <property type="evidence" value="ECO:0007669"/>
    <property type="project" value="UniProtKB-KW"/>
</dbReference>
<dbReference type="GO" id="GO:0006808">
    <property type="term" value="P:regulation of nitrogen utilization"/>
    <property type="evidence" value="ECO:0007669"/>
    <property type="project" value="InterPro"/>
</dbReference>
<dbReference type="Gene3D" id="3.30.70.120">
    <property type="match status" value="1"/>
</dbReference>
<dbReference type="InterPro" id="IPR002187">
    <property type="entry name" value="N-reg_PII"/>
</dbReference>
<dbReference type="InterPro" id="IPR011322">
    <property type="entry name" value="N-reg_PII-like_a/b"/>
</dbReference>
<dbReference type="InterPro" id="IPR015867">
    <property type="entry name" value="N-reg_PII/ATP_PRibTrfase_C"/>
</dbReference>
<dbReference type="InterPro" id="IPR017918">
    <property type="entry name" value="N-reg_PII_CS"/>
</dbReference>
<dbReference type="PANTHER" id="PTHR30115">
    <property type="entry name" value="NITROGEN REGULATORY PROTEIN P-II"/>
    <property type="match status" value="1"/>
</dbReference>
<dbReference type="PANTHER" id="PTHR30115:SF13">
    <property type="entry name" value="PII-LIKE PROTEIN GLNBI"/>
    <property type="match status" value="1"/>
</dbReference>
<dbReference type="Pfam" id="PF00543">
    <property type="entry name" value="P-II"/>
    <property type="match status" value="1"/>
</dbReference>
<dbReference type="PRINTS" id="PR00340">
    <property type="entry name" value="PIIGLNB"/>
</dbReference>
<dbReference type="SMART" id="SM00938">
    <property type="entry name" value="P-II"/>
    <property type="match status" value="1"/>
</dbReference>
<dbReference type="SUPFAM" id="SSF54913">
    <property type="entry name" value="GlnB-like"/>
    <property type="match status" value="1"/>
</dbReference>
<dbReference type="PROSITE" id="PS00638">
    <property type="entry name" value="PII_GLNB_CTER"/>
    <property type="match status" value="1"/>
</dbReference>
<dbReference type="PROSITE" id="PS51343">
    <property type="entry name" value="PII_GLNB_DOM"/>
    <property type="match status" value="1"/>
</dbReference>
<proteinExistence type="inferred from homology"/>
<accession>P0CW45</accession>
<accession>P71524</accession>
<organism>
    <name type="scientific">Methanococcus maripaludis (strain DSM 14266 / JCM 13030 / NBRC 101832 / S2 / LL)</name>
    <dbReference type="NCBI Taxonomy" id="267377"/>
    <lineage>
        <taxon>Archaea</taxon>
        <taxon>Methanobacteriati</taxon>
        <taxon>Methanobacteriota</taxon>
        <taxon>Methanomada group</taxon>
        <taxon>Methanococci</taxon>
        <taxon>Methanococcales</taxon>
        <taxon>Methanococcaceae</taxon>
        <taxon>Methanococcus</taxon>
    </lineage>
</organism>
<protein>
    <recommendedName>
        <fullName>Nitrogen fixation nifHD region glnB-like protein 1</fullName>
    </recommendedName>
</protein>
<keyword id="KW-0535">Nitrogen fixation</keyword>
<keyword id="KW-1185">Reference proteome</keyword>
<keyword id="KW-0804">Transcription</keyword>
<keyword id="KW-0805">Transcription regulation</keyword>
<evidence type="ECO:0000250" key="1"/>
<evidence type="ECO:0000255" key="2">
    <source>
        <dbReference type="PROSITE-ProRule" id="PRU00675"/>
    </source>
</evidence>
<reference key="1">
    <citation type="journal article" date="2004" name="J. Bacteriol.">
        <title>Complete genome sequence of the genetically tractable hydrogenotrophic methanogen Methanococcus maripaludis.</title>
        <authorList>
            <person name="Hendrickson E.L."/>
            <person name="Kaul R."/>
            <person name="Zhou Y."/>
            <person name="Bovee D."/>
            <person name="Chapman P."/>
            <person name="Chung J."/>
            <person name="Conway de Macario E."/>
            <person name="Dodsworth J.A."/>
            <person name="Gillett W."/>
            <person name="Graham D.E."/>
            <person name="Hackett M."/>
            <person name="Haydock A.K."/>
            <person name="Kang A."/>
            <person name="Land M.L."/>
            <person name="Levy R."/>
            <person name="Lie T.J."/>
            <person name="Major T.A."/>
            <person name="Moore B.C."/>
            <person name="Porat I."/>
            <person name="Palmeiri A."/>
            <person name="Rouse G."/>
            <person name="Saenphimmachak C."/>
            <person name="Soell D."/>
            <person name="Van Dien S."/>
            <person name="Wang T."/>
            <person name="Whitman W.B."/>
            <person name="Xia Q."/>
            <person name="Zhang Y."/>
            <person name="Larimer F.W."/>
            <person name="Olson M.V."/>
            <person name="Leigh J.A."/>
        </authorList>
    </citation>
    <scope>NUCLEOTIDE SEQUENCE [LARGE SCALE GENOMIC DNA]</scope>
    <source>
        <strain>DSM 14266 / JCM 13030 / NBRC 101832 / S2 / LL</strain>
    </source>
</reference>